<accession>A7MJW5</accession>
<dbReference type="EMBL" id="CP000783">
    <property type="protein sequence ID" value="ABU78024.1"/>
    <property type="molecule type" value="Genomic_DNA"/>
</dbReference>
<dbReference type="RefSeq" id="WP_004386895.1">
    <property type="nucleotide sequence ID" value="NC_009778.1"/>
</dbReference>
<dbReference type="SMR" id="A7MJW5"/>
<dbReference type="GeneID" id="56731584"/>
<dbReference type="KEGG" id="esa:ESA_02794"/>
<dbReference type="HOGENOM" id="CLU_060739_1_2_6"/>
<dbReference type="Proteomes" id="UP000000260">
    <property type="component" value="Chromosome"/>
</dbReference>
<dbReference type="GO" id="GO:0003677">
    <property type="term" value="F:DNA binding"/>
    <property type="evidence" value="ECO:0007669"/>
    <property type="project" value="UniProtKB-UniRule"/>
</dbReference>
<dbReference type="GO" id="GO:0008270">
    <property type="term" value="F:zinc ion binding"/>
    <property type="evidence" value="ECO:0007669"/>
    <property type="project" value="UniProtKB-KW"/>
</dbReference>
<dbReference type="GO" id="GO:0006310">
    <property type="term" value="P:DNA recombination"/>
    <property type="evidence" value="ECO:0007669"/>
    <property type="project" value="UniProtKB-UniRule"/>
</dbReference>
<dbReference type="GO" id="GO:0006281">
    <property type="term" value="P:DNA repair"/>
    <property type="evidence" value="ECO:0007669"/>
    <property type="project" value="UniProtKB-UniRule"/>
</dbReference>
<dbReference type="CDD" id="cd01025">
    <property type="entry name" value="TOPRIM_recR"/>
    <property type="match status" value="1"/>
</dbReference>
<dbReference type="FunFam" id="1.10.8.420:FF:000001">
    <property type="entry name" value="Recombination protein RecR"/>
    <property type="match status" value="1"/>
</dbReference>
<dbReference type="FunFam" id="3.40.1360.10:FF:000001">
    <property type="entry name" value="Recombination protein RecR"/>
    <property type="match status" value="1"/>
</dbReference>
<dbReference type="Gene3D" id="3.40.1360.10">
    <property type="match status" value="1"/>
</dbReference>
<dbReference type="Gene3D" id="6.10.250.240">
    <property type="match status" value="1"/>
</dbReference>
<dbReference type="Gene3D" id="1.10.8.420">
    <property type="entry name" value="RecR Domain 1"/>
    <property type="match status" value="1"/>
</dbReference>
<dbReference type="HAMAP" id="MF_00017">
    <property type="entry name" value="RecR"/>
    <property type="match status" value="1"/>
</dbReference>
<dbReference type="InterPro" id="IPR000093">
    <property type="entry name" value="DNA_Rcmb_RecR"/>
</dbReference>
<dbReference type="InterPro" id="IPR023627">
    <property type="entry name" value="Rcmb_RecR"/>
</dbReference>
<dbReference type="InterPro" id="IPR015967">
    <property type="entry name" value="Rcmb_RecR_Znf"/>
</dbReference>
<dbReference type="InterPro" id="IPR006171">
    <property type="entry name" value="TOPRIM_dom"/>
</dbReference>
<dbReference type="InterPro" id="IPR034137">
    <property type="entry name" value="TOPRIM_RecR"/>
</dbReference>
<dbReference type="NCBIfam" id="TIGR00615">
    <property type="entry name" value="recR"/>
    <property type="match status" value="1"/>
</dbReference>
<dbReference type="PANTHER" id="PTHR30446">
    <property type="entry name" value="RECOMBINATION PROTEIN RECR"/>
    <property type="match status" value="1"/>
</dbReference>
<dbReference type="PANTHER" id="PTHR30446:SF0">
    <property type="entry name" value="RECOMBINATION PROTEIN RECR"/>
    <property type="match status" value="1"/>
</dbReference>
<dbReference type="Pfam" id="PF21175">
    <property type="entry name" value="RecR_C"/>
    <property type="match status" value="1"/>
</dbReference>
<dbReference type="Pfam" id="PF21176">
    <property type="entry name" value="RecR_HhH"/>
    <property type="match status" value="1"/>
</dbReference>
<dbReference type="Pfam" id="PF02132">
    <property type="entry name" value="RecR_ZnF"/>
    <property type="match status" value="1"/>
</dbReference>
<dbReference type="Pfam" id="PF13662">
    <property type="entry name" value="Toprim_4"/>
    <property type="match status" value="1"/>
</dbReference>
<dbReference type="SMART" id="SM00493">
    <property type="entry name" value="TOPRIM"/>
    <property type="match status" value="1"/>
</dbReference>
<dbReference type="SUPFAM" id="SSF111304">
    <property type="entry name" value="Recombination protein RecR"/>
    <property type="match status" value="1"/>
</dbReference>
<dbReference type="PROSITE" id="PS01300">
    <property type="entry name" value="RECR"/>
    <property type="match status" value="1"/>
</dbReference>
<dbReference type="PROSITE" id="PS50880">
    <property type="entry name" value="TOPRIM"/>
    <property type="match status" value="1"/>
</dbReference>
<feature type="chain" id="PRO_1000001539" description="Recombination protein RecR">
    <location>
        <begin position="1"/>
        <end position="201"/>
    </location>
</feature>
<feature type="domain" description="Toprim" evidence="1">
    <location>
        <begin position="81"/>
        <end position="176"/>
    </location>
</feature>
<feature type="zinc finger region" description="C4-type" evidence="1">
    <location>
        <begin position="57"/>
        <end position="72"/>
    </location>
</feature>
<protein>
    <recommendedName>
        <fullName evidence="1">Recombination protein RecR</fullName>
    </recommendedName>
</protein>
<name>RECR_CROS8</name>
<proteinExistence type="inferred from homology"/>
<comment type="function">
    <text evidence="1">May play a role in DNA repair. It seems to be involved in an RecBC-independent recombinational process of DNA repair. It may act with RecF and RecO.</text>
</comment>
<comment type="similarity">
    <text evidence="1">Belongs to the RecR family.</text>
</comment>
<reference key="1">
    <citation type="journal article" date="2010" name="PLoS ONE">
        <title>Genome sequence of Cronobacter sakazakii BAA-894 and comparative genomic hybridization analysis with other Cronobacter species.</title>
        <authorList>
            <person name="Kucerova E."/>
            <person name="Clifton S.W."/>
            <person name="Xia X.Q."/>
            <person name="Long F."/>
            <person name="Porwollik S."/>
            <person name="Fulton L."/>
            <person name="Fronick C."/>
            <person name="Minx P."/>
            <person name="Kyung K."/>
            <person name="Warren W."/>
            <person name="Fulton R."/>
            <person name="Feng D."/>
            <person name="Wollam A."/>
            <person name="Shah N."/>
            <person name="Bhonagiri V."/>
            <person name="Nash W.E."/>
            <person name="Hallsworth-Pepin K."/>
            <person name="Wilson R.K."/>
            <person name="McClelland M."/>
            <person name="Forsythe S.J."/>
        </authorList>
    </citation>
    <scope>NUCLEOTIDE SEQUENCE [LARGE SCALE GENOMIC DNA]</scope>
    <source>
        <strain>ATCC BAA-894</strain>
    </source>
</reference>
<evidence type="ECO:0000255" key="1">
    <source>
        <dbReference type="HAMAP-Rule" id="MF_00017"/>
    </source>
</evidence>
<sequence length="201" mass="21823">MQTSPLLTQLMEALRCLPGVGPKSAQRMAFTLLQRDRSGGMRLAQALTRAMSEIGHCADCRTFTEQEKCNICTNPRRQENGQICVVESPADIHAIEQTGQFSGRYFVLMGHLSPLDGIGPDDIGLDRLEQRLAAEPLKEIILATNPTVEGEATANYIAELCAQYGVDASRIAHGVPVGGELEMVDGTTLSHSLAGRHKMTF</sequence>
<keyword id="KW-0227">DNA damage</keyword>
<keyword id="KW-0233">DNA recombination</keyword>
<keyword id="KW-0234">DNA repair</keyword>
<keyword id="KW-0479">Metal-binding</keyword>
<keyword id="KW-1185">Reference proteome</keyword>
<keyword id="KW-0862">Zinc</keyword>
<keyword id="KW-0863">Zinc-finger</keyword>
<organism>
    <name type="scientific">Cronobacter sakazakii (strain ATCC BAA-894)</name>
    <name type="common">Enterobacter sakazakii</name>
    <dbReference type="NCBI Taxonomy" id="290339"/>
    <lineage>
        <taxon>Bacteria</taxon>
        <taxon>Pseudomonadati</taxon>
        <taxon>Pseudomonadota</taxon>
        <taxon>Gammaproteobacteria</taxon>
        <taxon>Enterobacterales</taxon>
        <taxon>Enterobacteriaceae</taxon>
        <taxon>Cronobacter</taxon>
    </lineage>
</organism>
<gene>
    <name evidence="1" type="primary">recR</name>
    <name type="ordered locus">ESA_02794</name>
</gene>